<proteinExistence type="inferred from homology"/>
<organism>
    <name type="scientific">Dictyostelium discoideum</name>
    <name type="common">Social amoeba</name>
    <dbReference type="NCBI Taxonomy" id="44689"/>
    <lineage>
        <taxon>Eukaryota</taxon>
        <taxon>Amoebozoa</taxon>
        <taxon>Evosea</taxon>
        <taxon>Eumycetozoa</taxon>
        <taxon>Dictyostelia</taxon>
        <taxon>Dictyosteliales</taxon>
        <taxon>Dictyosteliaceae</taxon>
        <taxon>Dictyostelium</taxon>
    </lineage>
</organism>
<sequence>MKYSQNQIVYVIFFFIILIVVKPIESVEWSDCSDPSDSFKIEKLEFSPEQPIAGQDLIISVSGYLNKEITKGEAYLAITFDRIPILKLKGNLCDGMGVTCPIPQGNYSTTTINQEIPENVPQGYYYVNFVLYDQDDLQITCVDVQMNITQS</sequence>
<evidence type="ECO:0000250" key="1"/>
<evidence type="ECO:0000255" key="2"/>
<evidence type="ECO:0000305" key="3"/>
<accession>Q54KP7</accession>
<gene>
    <name type="ORF">DDB_G0287185</name>
</gene>
<feature type="signal peptide" evidence="2">
    <location>
        <begin position="1"/>
        <end position="26"/>
    </location>
</feature>
<feature type="chain" id="PRO_0000365591" description="Putative phosphatidylglycerol/phosphatidylinositol transfer protein 3">
    <location>
        <begin position="27"/>
        <end position="151"/>
    </location>
</feature>
<reference key="1">
    <citation type="journal article" date="2005" name="Nature">
        <title>The genome of the social amoeba Dictyostelium discoideum.</title>
        <authorList>
            <person name="Eichinger L."/>
            <person name="Pachebat J.A."/>
            <person name="Gloeckner G."/>
            <person name="Rajandream M.A."/>
            <person name="Sucgang R."/>
            <person name="Berriman M."/>
            <person name="Song J."/>
            <person name="Olsen R."/>
            <person name="Szafranski K."/>
            <person name="Xu Q."/>
            <person name="Tunggal B."/>
            <person name="Kummerfeld S."/>
            <person name="Madera M."/>
            <person name="Konfortov B.A."/>
            <person name="Rivero F."/>
            <person name="Bankier A.T."/>
            <person name="Lehmann R."/>
            <person name="Hamlin N."/>
            <person name="Davies R."/>
            <person name="Gaudet P."/>
            <person name="Fey P."/>
            <person name="Pilcher K."/>
            <person name="Chen G."/>
            <person name="Saunders D."/>
            <person name="Sodergren E.J."/>
            <person name="Davis P."/>
            <person name="Kerhornou A."/>
            <person name="Nie X."/>
            <person name="Hall N."/>
            <person name="Anjard C."/>
            <person name="Hemphill L."/>
            <person name="Bason N."/>
            <person name="Farbrother P."/>
            <person name="Desany B."/>
            <person name="Just E."/>
            <person name="Morio T."/>
            <person name="Rost R."/>
            <person name="Churcher C.M."/>
            <person name="Cooper J."/>
            <person name="Haydock S."/>
            <person name="van Driessche N."/>
            <person name="Cronin A."/>
            <person name="Goodhead I."/>
            <person name="Muzny D.M."/>
            <person name="Mourier T."/>
            <person name="Pain A."/>
            <person name="Lu M."/>
            <person name="Harper D."/>
            <person name="Lindsay R."/>
            <person name="Hauser H."/>
            <person name="James K.D."/>
            <person name="Quiles M."/>
            <person name="Madan Babu M."/>
            <person name="Saito T."/>
            <person name="Buchrieser C."/>
            <person name="Wardroper A."/>
            <person name="Felder M."/>
            <person name="Thangavelu M."/>
            <person name="Johnson D."/>
            <person name="Knights A."/>
            <person name="Loulseged H."/>
            <person name="Mungall K.L."/>
            <person name="Oliver K."/>
            <person name="Price C."/>
            <person name="Quail M.A."/>
            <person name="Urushihara H."/>
            <person name="Hernandez J."/>
            <person name="Rabbinowitsch E."/>
            <person name="Steffen D."/>
            <person name="Sanders M."/>
            <person name="Ma J."/>
            <person name="Kohara Y."/>
            <person name="Sharp S."/>
            <person name="Simmonds M.N."/>
            <person name="Spiegler S."/>
            <person name="Tivey A."/>
            <person name="Sugano S."/>
            <person name="White B."/>
            <person name="Walker D."/>
            <person name="Woodward J.R."/>
            <person name="Winckler T."/>
            <person name="Tanaka Y."/>
            <person name="Shaulsky G."/>
            <person name="Schleicher M."/>
            <person name="Weinstock G.M."/>
            <person name="Rosenthal A."/>
            <person name="Cox E.C."/>
            <person name="Chisholm R.L."/>
            <person name="Gibbs R.A."/>
            <person name="Loomis W.F."/>
            <person name="Platzer M."/>
            <person name="Kay R.R."/>
            <person name="Williams J.G."/>
            <person name="Dear P.H."/>
            <person name="Noegel A.A."/>
            <person name="Barrell B.G."/>
            <person name="Kuspa A."/>
        </authorList>
    </citation>
    <scope>NUCLEOTIDE SEQUENCE [LARGE SCALE GENOMIC DNA]</scope>
    <source>
        <strain>AX4</strain>
    </source>
</reference>
<dbReference type="EMBL" id="AAFI02000098">
    <property type="protein sequence ID" value="EAL63867.1"/>
    <property type="molecule type" value="Genomic_DNA"/>
</dbReference>
<dbReference type="RefSeq" id="XP_637383.1">
    <property type="nucleotide sequence ID" value="XM_632291.1"/>
</dbReference>
<dbReference type="SMR" id="Q54KP7"/>
<dbReference type="PaxDb" id="44689-DDB0215771"/>
<dbReference type="EnsemblProtists" id="EAL63867">
    <property type="protein sequence ID" value="EAL63867"/>
    <property type="gene ID" value="DDB_G0287185"/>
</dbReference>
<dbReference type="GeneID" id="8626007"/>
<dbReference type="KEGG" id="ddi:DDB_G0287185"/>
<dbReference type="dictyBase" id="DDB_G0287185"/>
<dbReference type="VEuPathDB" id="AmoebaDB:DDB_G0287185"/>
<dbReference type="HOGENOM" id="CLU_097982_2_1_1"/>
<dbReference type="InParanoid" id="Q54KP7"/>
<dbReference type="OMA" id="DFKYCDN"/>
<dbReference type="PhylomeDB" id="Q54KP7"/>
<dbReference type="Reactome" id="R-DDI-6798695">
    <property type="pathway name" value="Neutrophil degranulation"/>
</dbReference>
<dbReference type="Reactome" id="R-DDI-8964038">
    <property type="pathway name" value="LDL clearance"/>
</dbReference>
<dbReference type="PRO" id="PR:Q54KP7"/>
<dbReference type="Proteomes" id="UP000002195">
    <property type="component" value="Chromosome 4"/>
</dbReference>
<dbReference type="GO" id="GO:0032934">
    <property type="term" value="F:sterol binding"/>
    <property type="evidence" value="ECO:0000318"/>
    <property type="project" value="GO_Central"/>
</dbReference>
<dbReference type="GO" id="GO:0015918">
    <property type="term" value="P:sterol transport"/>
    <property type="evidence" value="ECO:0000318"/>
    <property type="project" value="GO_Central"/>
</dbReference>
<dbReference type="FunFam" id="2.60.40.770:FF:000018">
    <property type="entry name" value="Putative phosphatidylglycerol/phosphatidylinositol transfer protein 3"/>
    <property type="match status" value="1"/>
</dbReference>
<dbReference type="Gene3D" id="2.60.40.770">
    <property type="match status" value="1"/>
</dbReference>
<dbReference type="InterPro" id="IPR014756">
    <property type="entry name" value="Ig_E-set"/>
</dbReference>
<dbReference type="InterPro" id="IPR003172">
    <property type="entry name" value="ML_dom"/>
</dbReference>
<dbReference type="InterPro" id="IPR039670">
    <property type="entry name" value="NPC2-like"/>
</dbReference>
<dbReference type="PANTHER" id="PTHR11306:SF60">
    <property type="entry name" value="COUNTIN-3-RELATED"/>
    <property type="match status" value="1"/>
</dbReference>
<dbReference type="PANTHER" id="PTHR11306">
    <property type="entry name" value="NIEMANN PICK TYPE C2 PROTEIN NPC2-RELATED"/>
    <property type="match status" value="1"/>
</dbReference>
<dbReference type="Pfam" id="PF02221">
    <property type="entry name" value="E1_DerP2_DerF2"/>
    <property type="match status" value="1"/>
</dbReference>
<dbReference type="SMART" id="SM00737">
    <property type="entry name" value="ML"/>
    <property type="match status" value="1"/>
</dbReference>
<dbReference type="SUPFAM" id="SSF81296">
    <property type="entry name" value="E set domains"/>
    <property type="match status" value="1"/>
</dbReference>
<comment type="function">
    <text evidence="1">Catalyzes the intermembrane transfer of phosphatidylglycerol and phosphatidylinositol.</text>
</comment>
<comment type="subunit">
    <text evidence="1">Monomer.</text>
</comment>
<comment type="similarity">
    <text evidence="3">Belongs to the NPC2 family.</text>
</comment>
<name>NPC23_DICDI</name>
<keyword id="KW-0445">Lipid transport</keyword>
<keyword id="KW-1185">Reference proteome</keyword>
<keyword id="KW-0732">Signal</keyword>
<keyword id="KW-0813">Transport</keyword>
<protein>
    <recommendedName>
        <fullName>Putative phosphatidylglycerol/phosphatidylinositol transfer protein 3</fullName>
        <shortName>PG/PI-TP</shortName>
    </recommendedName>
</protein>